<sequence length="164" mass="16572">MSTFSGDETAPFFGFLGAAAALVFSCMGAAYGTAKSGVGVASMGVMRPELVMKSIVPVVMAGVLGIYGLIIAVIISTGINPKAKSYYLFDGYAHLSSGLACGLAGLSAGMAIGIVGDAGVRANAQQPKLFVGMILILIFAEALALYGLIVGIILSSRAGQSRAE</sequence>
<gene>
    <name type="primary">VHA-c5</name>
    <name type="synonym">AVA-P5</name>
    <name type="synonym">AVAP5</name>
    <name type="ordered locus">At2g16510</name>
    <name type="ORF">F1P15.11</name>
</gene>
<comment type="function">
    <text>Proton-conducting pore forming subunit of the membrane integral V0 complex of vacuolar ATPase. V-ATPase is responsible for acidifying a variety of intracellular compartments in eukaryotic cells.</text>
</comment>
<comment type="subunit">
    <text>V-ATPase is a heteromultimeric enzyme composed of a peripheral catalytic V1 complex (components A to H) attached to an integral membrane V0 proton pore complex (components: a, c, c'', d and e). The proteolipid components c and c'' are present as a hexameric ring that forms the proton-conducting pore.</text>
</comment>
<comment type="subcellular location">
    <subcellularLocation>
        <location>Vacuole membrane</location>
        <topology>Multi-pass membrane protein</topology>
    </subcellularLocation>
    <text>Tonoplast.</text>
</comment>
<comment type="similarity">
    <text evidence="3">Belongs to the V-ATPase proteolipid subunit family.</text>
</comment>
<protein>
    <recommendedName>
        <fullName>V-type proton ATPase subunit c5</fullName>
        <shortName>V-ATPase subunit c5</shortName>
    </recommendedName>
    <alternativeName>
        <fullName>V-type proton ATPase 16 kDa proteolipid subunit c5</fullName>
        <shortName>V-ATPase 16 kDa proteolipid subunit c5</shortName>
    </alternativeName>
    <alternativeName>
        <fullName>Vacuolar H(+)-ATPase subunit c isoform 5</fullName>
    </alternativeName>
    <alternativeName>
        <fullName>Vacuolar proton pump 16 kDa proteolipid subunit c5</fullName>
    </alternativeName>
    <alternativeName>
        <fullName>Vacuolar proton pump subunit c5</fullName>
    </alternativeName>
</protein>
<name>VATL5_ARATH</name>
<keyword id="KW-0375">Hydrogen ion transport</keyword>
<keyword id="KW-0406">Ion transport</keyword>
<keyword id="KW-0472">Membrane</keyword>
<keyword id="KW-1185">Reference proteome</keyword>
<keyword id="KW-0812">Transmembrane</keyword>
<keyword id="KW-1133">Transmembrane helix</keyword>
<keyword id="KW-0813">Transport</keyword>
<keyword id="KW-0926">Vacuole</keyword>
<reference key="1">
    <citation type="journal article" date="1999" name="Nature">
        <title>Sequence and analysis of chromosome 2 of the plant Arabidopsis thaliana.</title>
        <authorList>
            <person name="Lin X."/>
            <person name="Kaul S."/>
            <person name="Rounsley S.D."/>
            <person name="Shea T.P."/>
            <person name="Benito M.-I."/>
            <person name="Town C.D."/>
            <person name="Fujii C.Y."/>
            <person name="Mason T.M."/>
            <person name="Bowman C.L."/>
            <person name="Barnstead M.E."/>
            <person name="Feldblyum T.V."/>
            <person name="Buell C.R."/>
            <person name="Ketchum K.A."/>
            <person name="Lee J.J."/>
            <person name="Ronning C.M."/>
            <person name="Koo H.L."/>
            <person name="Moffat K.S."/>
            <person name="Cronin L.A."/>
            <person name="Shen M."/>
            <person name="Pai G."/>
            <person name="Van Aken S."/>
            <person name="Umayam L."/>
            <person name="Tallon L.J."/>
            <person name="Gill J.E."/>
            <person name="Adams M.D."/>
            <person name="Carrera A.J."/>
            <person name="Creasy T.H."/>
            <person name="Goodman H.M."/>
            <person name="Somerville C.R."/>
            <person name="Copenhaver G.P."/>
            <person name="Preuss D."/>
            <person name="Nierman W.C."/>
            <person name="White O."/>
            <person name="Eisen J.A."/>
            <person name="Salzberg S.L."/>
            <person name="Fraser C.M."/>
            <person name="Venter J.C."/>
        </authorList>
    </citation>
    <scope>NUCLEOTIDE SEQUENCE [LARGE SCALE GENOMIC DNA]</scope>
    <source>
        <strain>cv. Columbia</strain>
    </source>
</reference>
<reference key="2">
    <citation type="journal article" date="2017" name="Plant J.">
        <title>Araport11: a complete reannotation of the Arabidopsis thaliana reference genome.</title>
        <authorList>
            <person name="Cheng C.Y."/>
            <person name="Krishnakumar V."/>
            <person name="Chan A.P."/>
            <person name="Thibaud-Nissen F."/>
            <person name="Schobel S."/>
            <person name="Town C.D."/>
        </authorList>
    </citation>
    <scope>GENOME REANNOTATION</scope>
    <source>
        <strain>cv. Columbia</strain>
    </source>
</reference>
<reference key="3">
    <citation type="submission" date="2004-07" db="EMBL/GenBank/DDBJ databases">
        <title>Arabidopsis ORF clones.</title>
        <authorList>
            <person name="Shinn P."/>
            <person name="Chen H."/>
            <person name="Cheuk R.F."/>
            <person name="Kim C.J."/>
            <person name="Ecker J.R."/>
        </authorList>
    </citation>
    <scope>NUCLEOTIDE SEQUENCE [LARGE SCALE MRNA]</scope>
    <source>
        <strain>cv. Columbia</strain>
    </source>
</reference>
<reference key="4">
    <citation type="journal article" date="2002" name="Trends Plant Sci.">
        <title>A simple nomenclature for a complex proton pump: VHA genes encode the vacuolar H(+)-ATPase.</title>
        <authorList>
            <person name="Sze H."/>
            <person name="Schumacher K."/>
            <person name="Mueller M.L."/>
            <person name="Padmanaban S."/>
            <person name="Taiz L."/>
        </authorList>
    </citation>
    <scope>GENE FAMILY</scope>
    <scope>NOMENCLATURE</scope>
</reference>
<feature type="chain" id="PRO_0000415776" description="V-type proton ATPase subunit c5">
    <location>
        <begin position="1"/>
        <end position="164"/>
    </location>
</feature>
<feature type="topological domain" description="Lumenal" evidence="2">
    <location>
        <begin position="1"/>
        <end position="11"/>
    </location>
</feature>
<feature type="transmembrane region" description="Helical" evidence="2">
    <location>
        <begin position="12"/>
        <end position="32"/>
    </location>
</feature>
<feature type="topological domain" description="Cytoplasmic" evidence="2">
    <location>
        <begin position="33"/>
        <end position="54"/>
    </location>
</feature>
<feature type="transmembrane region" description="Helical" evidence="2">
    <location>
        <begin position="55"/>
        <end position="75"/>
    </location>
</feature>
<feature type="topological domain" description="Lumenal" evidence="2">
    <location>
        <begin position="76"/>
        <end position="94"/>
    </location>
</feature>
<feature type="transmembrane region" description="Helical" evidence="2">
    <location>
        <begin position="95"/>
        <end position="116"/>
    </location>
</feature>
<feature type="topological domain" description="Cytoplasmic" evidence="2">
    <location>
        <begin position="117"/>
        <end position="128"/>
    </location>
</feature>
<feature type="transmembrane region" description="Helical" evidence="2">
    <location>
        <begin position="129"/>
        <end position="154"/>
    </location>
</feature>
<feature type="topological domain" description="Lumenal" evidence="2">
    <location>
        <begin position="155"/>
        <end position="164"/>
    </location>
</feature>
<feature type="site" description="Essential for proton translocation" evidence="1">
    <location>
        <position position="141"/>
    </location>
</feature>
<evidence type="ECO:0000250" key="1"/>
<evidence type="ECO:0000255" key="2"/>
<evidence type="ECO:0000305" key="3"/>
<proteinExistence type="evidence at transcript level"/>
<organism>
    <name type="scientific">Arabidopsis thaliana</name>
    <name type="common">Mouse-ear cress</name>
    <dbReference type="NCBI Taxonomy" id="3702"/>
    <lineage>
        <taxon>Eukaryota</taxon>
        <taxon>Viridiplantae</taxon>
        <taxon>Streptophyta</taxon>
        <taxon>Embryophyta</taxon>
        <taxon>Tracheophyta</taxon>
        <taxon>Spermatophyta</taxon>
        <taxon>Magnoliopsida</taxon>
        <taxon>eudicotyledons</taxon>
        <taxon>Gunneridae</taxon>
        <taxon>Pentapetalae</taxon>
        <taxon>rosids</taxon>
        <taxon>malvids</taxon>
        <taxon>Brassicales</taxon>
        <taxon>Brassicaceae</taxon>
        <taxon>Camelineae</taxon>
        <taxon>Arabidopsis</taxon>
    </lineage>
</organism>
<dbReference type="EMBL" id="AC007195">
    <property type="protein sequence ID" value="AAD26493.1"/>
    <property type="molecule type" value="Genomic_DNA"/>
</dbReference>
<dbReference type="EMBL" id="CP002685">
    <property type="protein sequence ID" value="AEC06505.1"/>
    <property type="molecule type" value="Genomic_DNA"/>
</dbReference>
<dbReference type="EMBL" id="BT014769">
    <property type="protein sequence ID" value="AAT41752.1"/>
    <property type="molecule type" value="mRNA"/>
</dbReference>
<dbReference type="EMBL" id="BT015005">
    <property type="protein sequence ID" value="AAT70456.1"/>
    <property type="molecule type" value="mRNA"/>
</dbReference>
<dbReference type="PIR" id="S60130">
    <property type="entry name" value="S60130"/>
</dbReference>
<dbReference type="RefSeq" id="NP_179244.1">
    <property type="nucleotide sequence ID" value="NM_127205.5"/>
</dbReference>
<dbReference type="SMR" id="P0DH94"/>
<dbReference type="BioGRID" id="14906">
    <property type="interactions" value="2"/>
</dbReference>
<dbReference type="BioGRID" id="15327">
    <property type="interactions" value="4"/>
</dbReference>
<dbReference type="FunCoup" id="P0DH94">
    <property type="interactions" value="3206"/>
</dbReference>
<dbReference type="STRING" id="3702.P0DH94"/>
<dbReference type="EnsemblPlants" id="AT2G16510.1">
    <property type="protein sequence ID" value="AT2G16510.1"/>
    <property type="gene ID" value="AT2G16510"/>
</dbReference>
<dbReference type="EnsemblPlants" id="AT4G34720.1">
    <property type="protein sequence ID" value="AT4G34720.1"/>
    <property type="gene ID" value="AT4G34720"/>
</dbReference>
<dbReference type="EnsemblPlants" id="AT4G38920.1">
    <property type="protein sequence ID" value="AT4G38920.1"/>
    <property type="gene ID" value="AT4G38920"/>
</dbReference>
<dbReference type="GeneID" id="816150"/>
<dbReference type="Gramene" id="AT2G16510.1">
    <property type="protein sequence ID" value="AT2G16510.1"/>
    <property type="gene ID" value="AT2G16510"/>
</dbReference>
<dbReference type="Gramene" id="AT4G34720.1">
    <property type="protein sequence ID" value="AT4G34720.1"/>
    <property type="gene ID" value="AT4G34720"/>
</dbReference>
<dbReference type="Gramene" id="AT4G38920.1">
    <property type="protein sequence ID" value="AT4G38920.1"/>
    <property type="gene ID" value="AT4G38920"/>
</dbReference>
<dbReference type="KEGG" id="ath:AT2G16510"/>
<dbReference type="KEGG" id="ath:AT4G34720"/>
<dbReference type="KEGG" id="ath:AT4G38920"/>
<dbReference type="Araport" id="AT2G16510"/>
<dbReference type="TAIR" id="AT2G16510"/>
<dbReference type="HOGENOM" id="CLU_085752_1_0_1"/>
<dbReference type="InParanoid" id="P0DH94"/>
<dbReference type="OMA" id="MGVMKPD"/>
<dbReference type="OrthoDB" id="1106591at2759"/>
<dbReference type="PhylomeDB" id="P0DH94"/>
<dbReference type="PRO" id="PR:P0DH94"/>
<dbReference type="Proteomes" id="UP000006548">
    <property type="component" value="Chromosome 2"/>
</dbReference>
<dbReference type="ExpressionAtlas" id="P0DH94">
    <property type="expression patterns" value="baseline and differential"/>
</dbReference>
<dbReference type="GO" id="GO:0000325">
    <property type="term" value="C:plant-type vacuole"/>
    <property type="evidence" value="ECO:0007005"/>
    <property type="project" value="TAIR"/>
</dbReference>
<dbReference type="GO" id="GO:0005886">
    <property type="term" value="C:plasma membrane"/>
    <property type="evidence" value="ECO:0007005"/>
    <property type="project" value="TAIR"/>
</dbReference>
<dbReference type="GO" id="GO:0033179">
    <property type="term" value="C:proton-transporting V-type ATPase, V0 domain"/>
    <property type="evidence" value="ECO:0007669"/>
    <property type="project" value="InterPro"/>
</dbReference>
<dbReference type="GO" id="GO:0005774">
    <property type="term" value="C:vacuolar membrane"/>
    <property type="evidence" value="ECO:0007669"/>
    <property type="project" value="UniProtKB-SubCell"/>
</dbReference>
<dbReference type="GO" id="GO:0005773">
    <property type="term" value="C:vacuole"/>
    <property type="evidence" value="ECO:0007005"/>
    <property type="project" value="TAIR"/>
</dbReference>
<dbReference type="GO" id="GO:0046961">
    <property type="term" value="F:proton-transporting ATPase activity, rotational mechanism"/>
    <property type="evidence" value="ECO:0007669"/>
    <property type="project" value="InterPro"/>
</dbReference>
<dbReference type="CDD" id="cd18175">
    <property type="entry name" value="ATP-synt_Vo_c_ATP6C_rpt1"/>
    <property type="match status" value="1"/>
</dbReference>
<dbReference type="CDD" id="cd18176">
    <property type="entry name" value="ATP-synt_Vo_c_ATP6C_rpt2"/>
    <property type="match status" value="1"/>
</dbReference>
<dbReference type="FunFam" id="1.20.120.610:FF:000003">
    <property type="entry name" value="V-type proton ATPase proteolipid subunit"/>
    <property type="match status" value="1"/>
</dbReference>
<dbReference type="Gene3D" id="1.20.120.610">
    <property type="entry name" value="lithium bound rotor ring of v- atpase"/>
    <property type="match status" value="1"/>
</dbReference>
<dbReference type="InterPro" id="IPR002379">
    <property type="entry name" value="ATPase_proteolipid_c-like_dom"/>
</dbReference>
<dbReference type="InterPro" id="IPR000245">
    <property type="entry name" value="ATPase_proteolipid_csu"/>
</dbReference>
<dbReference type="InterPro" id="IPR011555">
    <property type="entry name" value="ATPase_proteolipid_su_C_euk"/>
</dbReference>
<dbReference type="InterPro" id="IPR035921">
    <property type="entry name" value="F/V-ATP_Csub_sf"/>
</dbReference>
<dbReference type="NCBIfam" id="TIGR01100">
    <property type="entry name" value="V_ATP_synt_C"/>
    <property type="match status" value="1"/>
</dbReference>
<dbReference type="PANTHER" id="PTHR10263">
    <property type="entry name" value="V-TYPE PROTON ATPASE PROTEOLIPID SUBUNIT"/>
    <property type="match status" value="1"/>
</dbReference>
<dbReference type="Pfam" id="PF00137">
    <property type="entry name" value="ATP-synt_C"/>
    <property type="match status" value="2"/>
</dbReference>
<dbReference type="PRINTS" id="PR00122">
    <property type="entry name" value="VACATPASE"/>
</dbReference>
<dbReference type="SUPFAM" id="SSF81333">
    <property type="entry name" value="F1F0 ATP synthase subunit C"/>
    <property type="match status" value="2"/>
</dbReference>
<accession>P0DH94</accession>
<accession>P59227</accession>
<accession>Q39037</accession>
<accession>Q39038</accession>
<accession>Q39039</accession>
<accession>Q42424</accession>
<accession>Q6IDA4</accession>
<accession>Q96298</accession>